<accession>A6TD24</accession>
<organism>
    <name type="scientific">Klebsiella pneumoniae subsp. pneumoniae (strain ATCC 700721 / MGH 78578)</name>
    <dbReference type="NCBI Taxonomy" id="272620"/>
    <lineage>
        <taxon>Bacteria</taxon>
        <taxon>Pseudomonadati</taxon>
        <taxon>Pseudomonadota</taxon>
        <taxon>Gammaproteobacteria</taxon>
        <taxon>Enterobacterales</taxon>
        <taxon>Enterobacteriaceae</taxon>
        <taxon>Klebsiella/Raoultella group</taxon>
        <taxon>Klebsiella</taxon>
        <taxon>Klebsiella pneumoniae complex</taxon>
    </lineage>
</organism>
<keyword id="KW-0067">ATP-binding</keyword>
<keyword id="KW-0227">DNA damage</keyword>
<keyword id="KW-0234">DNA repair</keyword>
<keyword id="KW-0238">DNA-binding</keyword>
<keyword id="KW-0547">Nucleotide-binding</keyword>
<gene>
    <name evidence="1" type="primary">mutS</name>
    <name type="ordered locus">KPN78578_30340</name>
    <name type="ORF">KPN_03094</name>
</gene>
<feature type="chain" id="PRO_1000071277" description="DNA mismatch repair protein MutS">
    <location>
        <begin position="1"/>
        <end position="853"/>
    </location>
</feature>
<feature type="binding site" evidence="1">
    <location>
        <begin position="614"/>
        <end position="621"/>
    </location>
    <ligand>
        <name>ATP</name>
        <dbReference type="ChEBI" id="CHEBI:30616"/>
    </ligand>
</feature>
<name>MUTS_KLEP7</name>
<reference key="1">
    <citation type="submission" date="2006-09" db="EMBL/GenBank/DDBJ databases">
        <authorList>
            <consortium name="The Klebsiella pneumonia Genome Sequencing Project"/>
            <person name="McClelland M."/>
            <person name="Sanderson E.K."/>
            <person name="Spieth J."/>
            <person name="Clifton W.S."/>
            <person name="Latreille P."/>
            <person name="Sabo A."/>
            <person name="Pepin K."/>
            <person name="Bhonagiri V."/>
            <person name="Porwollik S."/>
            <person name="Ali J."/>
            <person name="Wilson R.K."/>
        </authorList>
    </citation>
    <scope>NUCLEOTIDE SEQUENCE [LARGE SCALE GENOMIC DNA]</scope>
    <source>
        <strain>ATCC 700721 / MGH 78578</strain>
    </source>
</reference>
<proteinExistence type="inferred from homology"/>
<comment type="function">
    <text evidence="1">This protein is involved in the repair of mismatches in DNA. It is possible that it carries out the mismatch recognition step. This protein has a weak ATPase activity.</text>
</comment>
<comment type="similarity">
    <text evidence="1">Belongs to the DNA mismatch repair MutS family.</text>
</comment>
<sequence length="853" mass="95082">MSTIDNLDAHTPMMQQYLKLKAQHPDILLFYRMGDFYELFYDDAKRASQLLDISLTKRGASAGEPIPMAGIPHHAVENYLAKLVNQGESVAICEQIGDPATTKGPVERKVVRIVTPGTISDEALLQERQDNLLAAIWQDSKGFGYATLDISSGRFRLSEPADRETMAAELQRTNPAELLYAEDFAESSLIEGRRGLRRRPLWEFEIDTARQQLNLQFGTRDLVGFGVENAPRGLCAAGCLLQYVKDTQRTSLPHIRSITMERQQDSIIMDAATRRNLEITQNLAGGTDNTLASVLDCTVTPMGSRMLKRWLHMPVRDTAVLVERQQTIGALQERYTELQPVLRQVGDLERILARLALRTARPRDLARMRHALQQLPLLRELLADVDSQPVQKLREKMGEFTELRELLERAVIDAPPVLVRDGGVIAPGYSEELDEWRALADGATDYLDKLEIRERERLGLDTLKVGYNAVHGYYIQISRGQSHLAPIHYVRRQTLKNAERYIIPELKEYEDKVLTSKGKALALEKQLYDELFDLLLPHLADLQTSASALAELDVLVNLAERAETLNYCCPTFSDKPGIRISEGRHPVVEQVLKEPFIANPLQLAPQRRMLIITGPNMGGKSTYMRQTALIALLAYIGSYVPAQKVEIGPIDRIFTRVGAADDLASGRSTFMVEMTETANILHNATEHSLVLMDEIGRGTSTYDGLSLAWACAENLANKIKALTLFATHYFELTQLPEKMEGVANVHLDALEHGDTIAFMHSVQDGAASKSYGLAVAALAGVPKEVIKRARQKLRELESISPNAAATQVDGTQMSLLAAPEETSPAVEALENLDPDSLTPRQALEWIYRLKSLV</sequence>
<dbReference type="EMBL" id="CP000647">
    <property type="protein sequence ID" value="ABR78495.1"/>
    <property type="molecule type" value="Genomic_DNA"/>
</dbReference>
<dbReference type="RefSeq" id="WP_004151059.1">
    <property type="nucleotide sequence ID" value="NC_009648.1"/>
</dbReference>
<dbReference type="SMR" id="A6TD24"/>
<dbReference type="STRING" id="272620.KPN_03094"/>
<dbReference type="PaxDb" id="272620-KPN_03094"/>
<dbReference type="EnsemblBacteria" id="ABR78495">
    <property type="protein sequence ID" value="ABR78495"/>
    <property type="gene ID" value="KPN_03094"/>
</dbReference>
<dbReference type="GeneID" id="69753814"/>
<dbReference type="KEGG" id="kpn:KPN_03094"/>
<dbReference type="HOGENOM" id="CLU_002472_4_0_6"/>
<dbReference type="Proteomes" id="UP000000265">
    <property type="component" value="Chromosome"/>
</dbReference>
<dbReference type="GO" id="GO:0005829">
    <property type="term" value="C:cytosol"/>
    <property type="evidence" value="ECO:0007669"/>
    <property type="project" value="TreeGrafter"/>
</dbReference>
<dbReference type="GO" id="GO:0005524">
    <property type="term" value="F:ATP binding"/>
    <property type="evidence" value="ECO:0007669"/>
    <property type="project" value="UniProtKB-UniRule"/>
</dbReference>
<dbReference type="GO" id="GO:0140664">
    <property type="term" value="F:ATP-dependent DNA damage sensor activity"/>
    <property type="evidence" value="ECO:0007669"/>
    <property type="project" value="InterPro"/>
</dbReference>
<dbReference type="GO" id="GO:0003684">
    <property type="term" value="F:damaged DNA binding"/>
    <property type="evidence" value="ECO:0007669"/>
    <property type="project" value="UniProtKB-UniRule"/>
</dbReference>
<dbReference type="GO" id="GO:0030983">
    <property type="term" value="F:mismatched DNA binding"/>
    <property type="evidence" value="ECO:0007669"/>
    <property type="project" value="InterPro"/>
</dbReference>
<dbReference type="GO" id="GO:0006298">
    <property type="term" value="P:mismatch repair"/>
    <property type="evidence" value="ECO:0007669"/>
    <property type="project" value="UniProtKB-UniRule"/>
</dbReference>
<dbReference type="CDD" id="cd03284">
    <property type="entry name" value="ABC_MutS1"/>
    <property type="match status" value="1"/>
</dbReference>
<dbReference type="FunFam" id="1.10.1420.10:FF:000002">
    <property type="entry name" value="DNA mismatch repair protein MutS"/>
    <property type="match status" value="1"/>
</dbReference>
<dbReference type="FunFam" id="3.30.420.110:FF:000001">
    <property type="entry name" value="DNA mismatch repair protein MutS"/>
    <property type="match status" value="1"/>
</dbReference>
<dbReference type="FunFam" id="3.40.1170.10:FF:000001">
    <property type="entry name" value="DNA mismatch repair protein MutS"/>
    <property type="match status" value="1"/>
</dbReference>
<dbReference type="FunFam" id="3.40.50.300:FF:000283">
    <property type="entry name" value="DNA mismatch repair protein MutS"/>
    <property type="match status" value="1"/>
</dbReference>
<dbReference type="Gene3D" id="1.10.1420.10">
    <property type="match status" value="2"/>
</dbReference>
<dbReference type="Gene3D" id="6.10.140.430">
    <property type="match status" value="1"/>
</dbReference>
<dbReference type="Gene3D" id="3.40.1170.10">
    <property type="entry name" value="DNA repair protein MutS, domain I"/>
    <property type="match status" value="1"/>
</dbReference>
<dbReference type="Gene3D" id="3.30.420.110">
    <property type="entry name" value="MutS, connector domain"/>
    <property type="match status" value="1"/>
</dbReference>
<dbReference type="Gene3D" id="3.40.50.300">
    <property type="entry name" value="P-loop containing nucleotide triphosphate hydrolases"/>
    <property type="match status" value="1"/>
</dbReference>
<dbReference type="HAMAP" id="MF_00096">
    <property type="entry name" value="MutS"/>
    <property type="match status" value="1"/>
</dbReference>
<dbReference type="InterPro" id="IPR005748">
    <property type="entry name" value="DNA_mismatch_repair_MutS"/>
</dbReference>
<dbReference type="InterPro" id="IPR007695">
    <property type="entry name" value="DNA_mismatch_repair_MutS-lik_N"/>
</dbReference>
<dbReference type="InterPro" id="IPR017261">
    <property type="entry name" value="DNA_mismatch_repair_MutS/MSH"/>
</dbReference>
<dbReference type="InterPro" id="IPR000432">
    <property type="entry name" value="DNA_mismatch_repair_MutS_C"/>
</dbReference>
<dbReference type="InterPro" id="IPR007861">
    <property type="entry name" value="DNA_mismatch_repair_MutS_clamp"/>
</dbReference>
<dbReference type="InterPro" id="IPR007696">
    <property type="entry name" value="DNA_mismatch_repair_MutS_core"/>
</dbReference>
<dbReference type="InterPro" id="IPR016151">
    <property type="entry name" value="DNA_mismatch_repair_MutS_N"/>
</dbReference>
<dbReference type="InterPro" id="IPR036187">
    <property type="entry name" value="DNA_mismatch_repair_MutS_sf"/>
</dbReference>
<dbReference type="InterPro" id="IPR007860">
    <property type="entry name" value="DNA_mmatch_repair_MutS_con_dom"/>
</dbReference>
<dbReference type="InterPro" id="IPR045076">
    <property type="entry name" value="MutS"/>
</dbReference>
<dbReference type="InterPro" id="IPR036678">
    <property type="entry name" value="MutS_con_dom_sf"/>
</dbReference>
<dbReference type="InterPro" id="IPR027417">
    <property type="entry name" value="P-loop_NTPase"/>
</dbReference>
<dbReference type="NCBIfam" id="TIGR01070">
    <property type="entry name" value="mutS1"/>
    <property type="match status" value="1"/>
</dbReference>
<dbReference type="NCBIfam" id="NF003810">
    <property type="entry name" value="PRK05399.1"/>
    <property type="match status" value="1"/>
</dbReference>
<dbReference type="PANTHER" id="PTHR11361:SF34">
    <property type="entry name" value="DNA MISMATCH REPAIR PROTEIN MSH1, MITOCHONDRIAL"/>
    <property type="match status" value="1"/>
</dbReference>
<dbReference type="PANTHER" id="PTHR11361">
    <property type="entry name" value="DNA MISMATCH REPAIR PROTEIN MUTS FAMILY MEMBER"/>
    <property type="match status" value="1"/>
</dbReference>
<dbReference type="Pfam" id="PF01624">
    <property type="entry name" value="MutS_I"/>
    <property type="match status" value="1"/>
</dbReference>
<dbReference type="Pfam" id="PF05188">
    <property type="entry name" value="MutS_II"/>
    <property type="match status" value="1"/>
</dbReference>
<dbReference type="Pfam" id="PF05192">
    <property type="entry name" value="MutS_III"/>
    <property type="match status" value="1"/>
</dbReference>
<dbReference type="Pfam" id="PF05190">
    <property type="entry name" value="MutS_IV"/>
    <property type="match status" value="1"/>
</dbReference>
<dbReference type="Pfam" id="PF00488">
    <property type="entry name" value="MutS_V"/>
    <property type="match status" value="1"/>
</dbReference>
<dbReference type="PIRSF" id="PIRSF037677">
    <property type="entry name" value="DNA_mis_repair_Msh6"/>
    <property type="match status" value="1"/>
</dbReference>
<dbReference type="SMART" id="SM00534">
    <property type="entry name" value="MUTSac"/>
    <property type="match status" value="1"/>
</dbReference>
<dbReference type="SMART" id="SM00533">
    <property type="entry name" value="MUTSd"/>
    <property type="match status" value="1"/>
</dbReference>
<dbReference type="SUPFAM" id="SSF55271">
    <property type="entry name" value="DNA repair protein MutS, domain I"/>
    <property type="match status" value="1"/>
</dbReference>
<dbReference type="SUPFAM" id="SSF53150">
    <property type="entry name" value="DNA repair protein MutS, domain II"/>
    <property type="match status" value="1"/>
</dbReference>
<dbReference type="SUPFAM" id="SSF48334">
    <property type="entry name" value="DNA repair protein MutS, domain III"/>
    <property type="match status" value="1"/>
</dbReference>
<dbReference type="SUPFAM" id="SSF52540">
    <property type="entry name" value="P-loop containing nucleoside triphosphate hydrolases"/>
    <property type="match status" value="1"/>
</dbReference>
<dbReference type="PROSITE" id="PS00486">
    <property type="entry name" value="DNA_MISMATCH_REPAIR_2"/>
    <property type="match status" value="1"/>
</dbReference>
<evidence type="ECO:0000255" key="1">
    <source>
        <dbReference type="HAMAP-Rule" id="MF_00096"/>
    </source>
</evidence>
<protein>
    <recommendedName>
        <fullName evidence="1">DNA mismatch repair protein MutS</fullName>
    </recommendedName>
</protein>